<name>LUXG_PHOLE</name>
<feature type="chain" id="PRO_0000068141" description="Probable flavin reductase">
    <location>
        <begin position="1"/>
        <end position="234"/>
    </location>
</feature>
<feature type="binding site" evidence="1">
    <location>
        <begin position="112"/>
        <end position="116"/>
    </location>
    <ligand>
        <name>pyridine</name>
        <dbReference type="ChEBI" id="CHEBI:16227"/>
    </ligand>
</feature>
<keyword id="KW-0274">FAD</keyword>
<keyword id="KW-0285">Flavoprotein</keyword>
<keyword id="KW-0455">Luminescence</keyword>
<keyword id="KW-0560">Oxidoreductase</keyword>
<accession>P29237</accession>
<protein>
    <recommendedName>
        <fullName>Probable flavin reductase</fullName>
        <ecNumber>1.-.-.-</ecNumber>
    </recommendedName>
</protein>
<evidence type="ECO:0000250" key="1"/>
<evidence type="ECO:0000305" key="2"/>
<organism>
    <name type="scientific">Photobacterium leiognathi</name>
    <dbReference type="NCBI Taxonomy" id="553611"/>
    <lineage>
        <taxon>Bacteria</taxon>
        <taxon>Pseudomonadati</taxon>
        <taxon>Pseudomonadota</taxon>
        <taxon>Gammaproteobacteria</taxon>
        <taxon>Vibrionales</taxon>
        <taxon>Vibrionaceae</taxon>
        <taxon>Photobacterium</taxon>
    </lineage>
</organism>
<gene>
    <name type="primary">luxG</name>
</gene>
<reference key="1">
    <citation type="journal article" date="1991" name="Eur. J. Biochem.">
        <title>The lux genes of the luminous bacterial symbiont, Photobacterium leiognathi, of the ponyfish. Nucleotide sequence, difference in gene organization, and high expression in mutant Escherichia coli.</title>
        <authorList>
            <person name="Lee C.Y."/>
            <person name="Szittner R.B."/>
            <person name="Meighen E.A."/>
        </authorList>
    </citation>
    <scope>NUCLEOTIDE SEQUENCE [GENOMIC DNA]</scope>
    <source>
        <strain>ATCC 25521 / DSM 21260 / CCUG 16229 / CIP 66.5 / NCIMB 2193 / L1</strain>
    </source>
</reference>
<reference key="2">
    <citation type="journal article" date="1992" name="Biochem. Biophys. Res. Commun.">
        <title>The lux genes in Photobacterium leiognathi are closely linked with genes corresponding in sequence to riboflavin synthesis genes.</title>
        <authorList>
            <person name="Lee C.Y."/>
            <person name="Meighen E.A."/>
        </authorList>
    </citation>
    <scope>NUCLEOTIDE SEQUENCE [GENOMIC DNA] OF 198-234</scope>
    <source>
        <strain>ATCC 25521 / DSM 21260 / CCUG 16229 / CIP 66.5 / NCIMB 2193 / L1</strain>
    </source>
</reference>
<sequence>MIFNCKVKKVEASDSHIYKVFIKPDKCFDFKAGQYVIVYLNGKNLPFSIANCPTCNELLELHVGGSVKESAIEAISHFINAFIYQKEFTIDAPHGDAWLRDESQSPLLLIAGGTGLSYINSILSCCISKQLSQPIYLYWGVNNCNLLYADQQLKTLAAQYRNINYIPVVENLNTDWQGKIGNVIDAVIEDFSDLSDFDIYVCGPFGMSRTAKDILISQKKANIGKMYSDAFSYT</sequence>
<proteinExistence type="inferred from homology"/>
<comment type="function">
    <text>Probable flavin reductase in the luminescent systems of different marine bacteria.</text>
</comment>
<comment type="similarity">
    <text evidence="2">Belongs to the Fre/LuxG FAD/NAD(P) flavoprotein oxidoreductase family.</text>
</comment>
<dbReference type="EC" id="1.-.-.-"/>
<dbReference type="EMBL" id="M63594">
    <property type="protein sequence ID" value="AAA25621.1"/>
    <property type="molecule type" value="Genomic_DNA"/>
</dbReference>
<dbReference type="EMBL" id="M90094">
    <property type="status" value="NOT_ANNOTATED_CDS"/>
    <property type="molecule type" value="Genomic_DNA"/>
</dbReference>
<dbReference type="PIR" id="S17956">
    <property type="entry name" value="S17956"/>
</dbReference>
<dbReference type="SMR" id="P29237"/>
<dbReference type="STRING" id="553611.GCA_001557755_01577"/>
<dbReference type="OrthoDB" id="9806195at2"/>
<dbReference type="BRENDA" id="1.5.1.42">
    <property type="organism ID" value="4778"/>
</dbReference>
<dbReference type="GO" id="GO:0016491">
    <property type="term" value="F:oxidoreductase activity"/>
    <property type="evidence" value="ECO:0007669"/>
    <property type="project" value="UniProtKB-KW"/>
</dbReference>
<dbReference type="GO" id="GO:0008218">
    <property type="term" value="P:bioluminescence"/>
    <property type="evidence" value="ECO:0007669"/>
    <property type="project" value="UniProtKB-KW"/>
</dbReference>
<dbReference type="CDD" id="cd06189">
    <property type="entry name" value="flavin_oxioreductase"/>
    <property type="match status" value="1"/>
</dbReference>
<dbReference type="Gene3D" id="3.40.50.80">
    <property type="entry name" value="Nucleotide-binding domain of ferredoxin-NADP reductase (FNR) module"/>
    <property type="match status" value="1"/>
</dbReference>
<dbReference type="Gene3D" id="2.40.30.10">
    <property type="entry name" value="Translation factors"/>
    <property type="match status" value="1"/>
</dbReference>
<dbReference type="InterPro" id="IPR039261">
    <property type="entry name" value="FNR_nucleotide-bd"/>
</dbReference>
<dbReference type="InterPro" id="IPR050415">
    <property type="entry name" value="MRET"/>
</dbReference>
<dbReference type="InterPro" id="IPR001433">
    <property type="entry name" value="OxRdtase_FAD/NAD-bd"/>
</dbReference>
<dbReference type="InterPro" id="IPR017938">
    <property type="entry name" value="Riboflavin_synthase-like_b-brl"/>
</dbReference>
<dbReference type="NCBIfam" id="NF005963">
    <property type="entry name" value="PRK08051.1"/>
    <property type="match status" value="1"/>
</dbReference>
<dbReference type="PANTHER" id="PTHR47354:SF7">
    <property type="entry name" value="NAD(P)H-FLAVIN REDUCTASE"/>
    <property type="match status" value="1"/>
</dbReference>
<dbReference type="PANTHER" id="PTHR47354">
    <property type="entry name" value="NADH OXIDOREDUCTASE HCR"/>
    <property type="match status" value="1"/>
</dbReference>
<dbReference type="Pfam" id="PF00175">
    <property type="entry name" value="NAD_binding_1"/>
    <property type="match status" value="1"/>
</dbReference>
<dbReference type="PRINTS" id="PR00410">
    <property type="entry name" value="PHEHYDRXLASE"/>
</dbReference>
<dbReference type="SUPFAM" id="SSF52343">
    <property type="entry name" value="Ferredoxin reductase-like, C-terminal NADP-linked domain"/>
    <property type="match status" value="1"/>
</dbReference>
<dbReference type="SUPFAM" id="SSF63380">
    <property type="entry name" value="Riboflavin synthase domain-like"/>
    <property type="match status" value="1"/>
</dbReference>